<feature type="chain" id="PRO_0000349999" description="Dual-specificity RNA methyltransferase RlmN">
    <location>
        <begin position="1"/>
        <end position="410"/>
    </location>
</feature>
<feature type="domain" description="Radical SAM core" evidence="2">
    <location>
        <begin position="130"/>
        <end position="373"/>
    </location>
</feature>
<feature type="region of interest" description="Disordered" evidence="3">
    <location>
        <begin position="7"/>
        <end position="26"/>
    </location>
</feature>
<feature type="compositionally biased region" description="Low complexity" evidence="3">
    <location>
        <begin position="15"/>
        <end position="26"/>
    </location>
</feature>
<feature type="active site" description="Proton acceptor" evidence="1">
    <location>
        <position position="120"/>
    </location>
</feature>
<feature type="active site" description="S-methylcysteine intermediate" evidence="1">
    <location>
        <position position="378"/>
    </location>
</feature>
<feature type="binding site" evidence="1">
    <location>
        <position position="144"/>
    </location>
    <ligand>
        <name>[4Fe-4S] cluster</name>
        <dbReference type="ChEBI" id="CHEBI:49883"/>
        <note>4Fe-4S-S-AdoMet</note>
    </ligand>
</feature>
<feature type="binding site" evidence="1">
    <location>
        <position position="148"/>
    </location>
    <ligand>
        <name>[4Fe-4S] cluster</name>
        <dbReference type="ChEBI" id="CHEBI:49883"/>
        <note>4Fe-4S-S-AdoMet</note>
    </ligand>
</feature>
<feature type="binding site" evidence="1">
    <location>
        <position position="151"/>
    </location>
    <ligand>
        <name>[4Fe-4S] cluster</name>
        <dbReference type="ChEBI" id="CHEBI:49883"/>
        <note>4Fe-4S-S-AdoMet</note>
    </ligand>
</feature>
<feature type="binding site" evidence="1">
    <location>
        <begin position="200"/>
        <end position="201"/>
    </location>
    <ligand>
        <name>S-adenosyl-L-methionine</name>
        <dbReference type="ChEBI" id="CHEBI:59789"/>
    </ligand>
</feature>
<feature type="binding site" evidence="1">
    <location>
        <position position="232"/>
    </location>
    <ligand>
        <name>S-adenosyl-L-methionine</name>
        <dbReference type="ChEBI" id="CHEBI:59789"/>
    </ligand>
</feature>
<feature type="binding site" evidence="1">
    <location>
        <begin position="254"/>
        <end position="256"/>
    </location>
    <ligand>
        <name>S-adenosyl-L-methionine</name>
        <dbReference type="ChEBI" id="CHEBI:59789"/>
    </ligand>
</feature>
<feature type="binding site" evidence="1">
    <location>
        <position position="335"/>
    </location>
    <ligand>
        <name>S-adenosyl-L-methionine</name>
        <dbReference type="ChEBI" id="CHEBI:59789"/>
    </ligand>
</feature>
<feature type="disulfide bond" description="(transient)" evidence="1">
    <location>
        <begin position="137"/>
        <end position="378"/>
    </location>
</feature>
<proteinExistence type="inferred from homology"/>
<sequence>MSSAVVVSSENLDGQQQSSSTPASPAAEKVNLLGMSRAELEKFFEDIGEKKFRAGQVMKWIHQYFVTDFAEMTNISGKLRAKLEQICEIKAPEVVHRHYSKDGTRKWVFRVGEGSGSLVETVLIPAEDKTGSRKTLCISSQVGCALDCSFCSTGKQGFQRDLTPDEIIGQLWMANYSYMEEVPVAERERSVTNVVMMGMGEPLLNYDAVLSSMHIMLDDFAYGMSKRRVTLSTSGVVPKIDQLAKDIDVALAISLHAPNDELRNELVPINKKYPLAQLIAACQRYIAKDGNESARKHVTIEYVMLEGVNDQPEHAQQLLKLLKNLPSKINLIPFNPFPHAPYGRSSRNRIISFQKTLSDAGFVCTIRQTRGDDIDAACGQLVGQVADRTRRAEQWQKKVAQRQEILRTQG</sequence>
<evidence type="ECO:0000255" key="1">
    <source>
        <dbReference type="HAMAP-Rule" id="MF_01849"/>
    </source>
</evidence>
<evidence type="ECO:0000255" key="2">
    <source>
        <dbReference type="PROSITE-ProRule" id="PRU01266"/>
    </source>
</evidence>
<evidence type="ECO:0000256" key="3">
    <source>
        <dbReference type="SAM" id="MobiDB-lite"/>
    </source>
</evidence>
<organism>
    <name type="scientific">Acinetobacter baumannii (strain AYE)</name>
    <dbReference type="NCBI Taxonomy" id="509173"/>
    <lineage>
        <taxon>Bacteria</taxon>
        <taxon>Pseudomonadati</taxon>
        <taxon>Pseudomonadota</taxon>
        <taxon>Gammaproteobacteria</taxon>
        <taxon>Moraxellales</taxon>
        <taxon>Moraxellaceae</taxon>
        <taxon>Acinetobacter</taxon>
        <taxon>Acinetobacter calcoaceticus/baumannii complex</taxon>
    </lineage>
</organism>
<comment type="function">
    <text evidence="1">Specifically methylates position 2 of adenine 2503 in 23S rRNA and position 2 of adenine 37 in tRNAs. m2A2503 modification seems to play a crucial role in the proofreading step occurring at the peptidyl transferase center and thus would serve to optimize ribosomal fidelity.</text>
</comment>
<comment type="catalytic activity">
    <reaction evidence="1">
        <text>adenosine(2503) in 23S rRNA + 2 reduced [2Fe-2S]-[ferredoxin] + 2 S-adenosyl-L-methionine = 2-methyladenosine(2503) in 23S rRNA + 5'-deoxyadenosine + L-methionine + 2 oxidized [2Fe-2S]-[ferredoxin] + S-adenosyl-L-homocysteine</text>
        <dbReference type="Rhea" id="RHEA:42916"/>
        <dbReference type="Rhea" id="RHEA-COMP:10000"/>
        <dbReference type="Rhea" id="RHEA-COMP:10001"/>
        <dbReference type="Rhea" id="RHEA-COMP:10152"/>
        <dbReference type="Rhea" id="RHEA-COMP:10282"/>
        <dbReference type="ChEBI" id="CHEBI:17319"/>
        <dbReference type="ChEBI" id="CHEBI:33737"/>
        <dbReference type="ChEBI" id="CHEBI:33738"/>
        <dbReference type="ChEBI" id="CHEBI:57844"/>
        <dbReference type="ChEBI" id="CHEBI:57856"/>
        <dbReference type="ChEBI" id="CHEBI:59789"/>
        <dbReference type="ChEBI" id="CHEBI:74411"/>
        <dbReference type="ChEBI" id="CHEBI:74497"/>
        <dbReference type="EC" id="2.1.1.192"/>
    </reaction>
</comment>
<comment type="catalytic activity">
    <reaction evidence="1">
        <text>adenosine(37) in tRNA + 2 reduced [2Fe-2S]-[ferredoxin] + 2 S-adenosyl-L-methionine = 2-methyladenosine(37) in tRNA + 5'-deoxyadenosine + L-methionine + 2 oxidized [2Fe-2S]-[ferredoxin] + S-adenosyl-L-homocysteine</text>
        <dbReference type="Rhea" id="RHEA:43332"/>
        <dbReference type="Rhea" id="RHEA-COMP:10000"/>
        <dbReference type="Rhea" id="RHEA-COMP:10001"/>
        <dbReference type="Rhea" id="RHEA-COMP:10162"/>
        <dbReference type="Rhea" id="RHEA-COMP:10485"/>
        <dbReference type="ChEBI" id="CHEBI:17319"/>
        <dbReference type="ChEBI" id="CHEBI:33737"/>
        <dbReference type="ChEBI" id="CHEBI:33738"/>
        <dbReference type="ChEBI" id="CHEBI:57844"/>
        <dbReference type="ChEBI" id="CHEBI:57856"/>
        <dbReference type="ChEBI" id="CHEBI:59789"/>
        <dbReference type="ChEBI" id="CHEBI:74411"/>
        <dbReference type="ChEBI" id="CHEBI:74497"/>
        <dbReference type="EC" id="2.1.1.192"/>
    </reaction>
</comment>
<comment type="cofactor">
    <cofactor evidence="1">
        <name>[4Fe-4S] cluster</name>
        <dbReference type="ChEBI" id="CHEBI:49883"/>
    </cofactor>
    <text evidence="1">Binds 1 [4Fe-4S] cluster. The cluster is coordinated with 3 cysteines and an exchangeable S-adenosyl-L-methionine.</text>
</comment>
<comment type="subcellular location">
    <subcellularLocation>
        <location evidence="1">Cytoplasm</location>
    </subcellularLocation>
</comment>
<comment type="miscellaneous">
    <text evidence="1">Reaction proceeds by a ping-pong mechanism involving intermediate methylation of a conserved cysteine residue.</text>
</comment>
<comment type="similarity">
    <text evidence="1">Belongs to the radical SAM superfamily. RlmN family.</text>
</comment>
<dbReference type="EC" id="2.1.1.192" evidence="1"/>
<dbReference type="EMBL" id="CU459141">
    <property type="protein sequence ID" value="CAM88067.1"/>
    <property type="molecule type" value="Genomic_DNA"/>
</dbReference>
<dbReference type="RefSeq" id="WP_000093084.1">
    <property type="nucleotide sequence ID" value="NZ_JBDGFB010000008.1"/>
</dbReference>
<dbReference type="SMR" id="B0V4U0"/>
<dbReference type="EnsemblBacteria" id="CAM88067">
    <property type="protein sequence ID" value="CAM88067"/>
    <property type="gene ID" value="ABAYE3266"/>
</dbReference>
<dbReference type="GeneID" id="92892502"/>
<dbReference type="KEGG" id="aby:ABAYE3266"/>
<dbReference type="HOGENOM" id="CLU_029101_0_0_6"/>
<dbReference type="GO" id="GO:0005737">
    <property type="term" value="C:cytoplasm"/>
    <property type="evidence" value="ECO:0007669"/>
    <property type="project" value="UniProtKB-SubCell"/>
</dbReference>
<dbReference type="GO" id="GO:0051539">
    <property type="term" value="F:4 iron, 4 sulfur cluster binding"/>
    <property type="evidence" value="ECO:0007669"/>
    <property type="project" value="UniProtKB-UniRule"/>
</dbReference>
<dbReference type="GO" id="GO:0046872">
    <property type="term" value="F:metal ion binding"/>
    <property type="evidence" value="ECO:0007669"/>
    <property type="project" value="UniProtKB-KW"/>
</dbReference>
<dbReference type="GO" id="GO:0070040">
    <property type="term" value="F:rRNA (adenine(2503)-C2-)-methyltransferase activity"/>
    <property type="evidence" value="ECO:0007669"/>
    <property type="project" value="UniProtKB-UniRule"/>
</dbReference>
<dbReference type="GO" id="GO:0019843">
    <property type="term" value="F:rRNA binding"/>
    <property type="evidence" value="ECO:0007669"/>
    <property type="project" value="UniProtKB-UniRule"/>
</dbReference>
<dbReference type="GO" id="GO:0002935">
    <property type="term" value="F:tRNA (adenine(37)-C2)-methyltransferase activity"/>
    <property type="evidence" value="ECO:0007669"/>
    <property type="project" value="UniProtKB-UniRule"/>
</dbReference>
<dbReference type="GO" id="GO:0000049">
    <property type="term" value="F:tRNA binding"/>
    <property type="evidence" value="ECO:0007669"/>
    <property type="project" value="UniProtKB-UniRule"/>
</dbReference>
<dbReference type="GO" id="GO:0070475">
    <property type="term" value="P:rRNA base methylation"/>
    <property type="evidence" value="ECO:0007669"/>
    <property type="project" value="UniProtKB-UniRule"/>
</dbReference>
<dbReference type="GO" id="GO:0030488">
    <property type="term" value="P:tRNA methylation"/>
    <property type="evidence" value="ECO:0007669"/>
    <property type="project" value="UniProtKB-UniRule"/>
</dbReference>
<dbReference type="CDD" id="cd01335">
    <property type="entry name" value="Radical_SAM"/>
    <property type="match status" value="1"/>
</dbReference>
<dbReference type="FunFam" id="1.10.150.530:FF:000003">
    <property type="entry name" value="Dual-specificity RNA methyltransferase RlmN"/>
    <property type="match status" value="1"/>
</dbReference>
<dbReference type="FunFam" id="3.20.20.70:FF:000008">
    <property type="entry name" value="Dual-specificity RNA methyltransferase RlmN"/>
    <property type="match status" value="1"/>
</dbReference>
<dbReference type="Gene3D" id="1.10.150.530">
    <property type="match status" value="1"/>
</dbReference>
<dbReference type="Gene3D" id="3.20.20.70">
    <property type="entry name" value="Aldolase class I"/>
    <property type="match status" value="1"/>
</dbReference>
<dbReference type="HAMAP" id="MF_01849">
    <property type="entry name" value="RNA_methyltr_RlmN"/>
    <property type="match status" value="1"/>
</dbReference>
<dbReference type="InterPro" id="IPR013785">
    <property type="entry name" value="Aldolase_TIM"/>
</dbReference>
<dbReference type="InterPro" id="IPR040072">
    <property type="entry name" value="Methyltransferase_A"/>
</dbReference>
<dbReference type="InterPro" id="IPR048641">
    <property type="entry name" value="RlmN_N"/>
</dbReference>
<dbReference type="InterPro" id="IPR027492">
    <property type="entry name" value="RNA_MTrfase_RlmN"/>
</dbReference>
<dbReference type="InterPro" id="IPR004383">
    <property type="entry name" value="rRNA_lsu_MTrfase_RlmN/Cfr"/>
</dbReference>
<dbReference type="InterPro" id="IPR007197">
    <property type="entry name" value="rSAM"/>
</dbReference>
<dbReference type="NCBIfam" id="TIGR00048">
    <property type="entry name" value="rRNA_mod_RlmN"/>
    <property type="match status" value="1"/>
</dbReference>
<dbReference type="PANTHER" id="PTHR30544">
    <property type="entry name" value="23S RRNA METHYLTRANSFERASE"/>
    <property type="match status" value="1"/>
</dbReference>
<dbReference type="PANTHER" id="PTHR30544:SF5">
    <property type="entry name" value="RADICAL SAM CORE DOMAIN-CONTAINING PROTEIN"/>
    <property type="match status" value="1"/>
</dbReference>
<dbReference type="Pfam" id="PF04055">
    <property type="entry name" value="Radical_SAM"/>
    <property type="match status" value="1"/>
</dbReference>
<dbReference type="Pfam" id="PF21016">
    <property type="entry name" value="RlmN_N"/>
    <property type="match status" value="1"/>
</dbReference>
<dbReference type="PIRSF" id="PIRSF006004">
    <property type="entry name" value="CHP00048"/>
    <property type="match status" value="1"/>
</dbReference>
<dbReference type="SFLD" id="SFLDF00275">
    <property type="entry name" value="adenosine_C2_methyltransferase"/>
    <property type="match status" value="1"/>
</dbReference>
<dbReference type="SFLD" id="SFLDG01062">
    <property type="entry name" value="methyltransferase_(Class_A)"/>
    <property type="match status" value="1"/>
</dbReference>
<dbReference type="SUPFAM" id="SSF102114">
    <property type="entry name" value="Radical SAM enzymes"/>
    <property type="match status" value="1"/>
</dbReference>
<dbReference type="PROSITE" id="PS51918">
    <property type="entry name" value="RADICAL_SAM"/>
    <property type="match status" value="1"/>
</dbReference>
<accession>B0V4U0</accession>
<gene>
    <name evidence="1" type="primary">rlmN</name>
    <name type="ordered locus">ABAYE3266</name>
</gene>
<name>RLMN_ACIBY</name>
<keyword id="KW-0004">4Fe-4S</keyword>
<keyword id="KW-0963">Cytoplasm</keyword>
<keyword id="KW-1015">Disulfide bond</keyword>
<keyword id="KW-0408">Iron</keyword>
<keyword id="KW-0411">Iron-sulfur</keyword>
<keyword id="KW-0479">Metal-binding</keyword>
<keyword id="KW-0489">Methyltransferase</keyword>
<keyword id="KW-0698">rRNA processing</keyword>
<keyword id="KW-0949">S-adenosyl-L-methionine</keyword>
<keyword id="KW-0808">Transferase</keyword>
<keyword id="KW-0819">tRNA processing</keyword>
<protein>
    <recommendedName>
        <fullName evidence="1">Dual-specificity RNA methyltransferase RlmN</fullName>
        <ecNumber evidence="1">2.1.1.192</ecNumber>
    </recommendedName>
    <alternativeName>
        <fullName evidence="1">23S rRNA (adenine(2503)-C(2))-methyltransferase</fullName>
    </alternativeName>
    <alternativeName>
        <fullName evidence="1">23S rRNA m2A2503 methyltransferase</fullName>
    </alternativeName>
    <alternativeName>
        <fullName evidence="1">Ribosomal RNA large subunit methyltransferase N</fullName>
    </alternativeName>
    <alternativeName>
        <fullName evidence="1">tRNA (adenine(37)-C(2))-methyltransferase</fullName>
    </alternativeName>
    <alternativeName>
        <fullName evidence="1">tRNA m2A37 methyltransferase</fullName>
    </alternativeName>
</protein>
<reference key="1">
    <citation type="journal article" date="2008" name="PLoS ONE">
        <title>Comparative analysis of Acinetobacters: three genomes for three lifestyles.</title>
        <authorList>
            <person name="Vallenet D."/>
            <person name="Nordmann P."/>
            <person name="Barbe V."/>
            <person name="Poirel L."/>
            <person name="Mangenot S."/>
            <person name="Bataille E."/>
            <person name="Dossat C."/>
            <person name="Gas S."/>
            <person name="Kreimeyer A."/>
            <person name="Lenoble P."/>
            <person name="Oztas S."/>
            <person name="Poulain J."/>
            <person name="Segurens B."/>
            <person name="Robert C."/>
            <person name="Abergel C."/>
            <person name="Claverie J.-M."/>
            <person name="Raoult D."/>
            <person name="Medigue C."/>
            <person name="Weissenbach J."/>
            <person name="Cruveiller S."/>
        </authorList>
    </citation>
    <scope>NUCLEOTIDE SEQUENCE [LARGE SCALE GENOMIC DNA]</scope>
    <source>
        <strain>AYE</strain>
    </source>
</reference>